<keyword id="KW-0186">Copper</keyword>
<keyword id="KW-0249">Electron transport</keyword>
<keyword id="KW-0460">Magnesium</keyword>
<keyword id="KW-0472">Membrane</keyword>
<keyword id="KW-0479">Metal-binding</keyword>
<keyword id="KW-0496">Mitochondrion</keyword>
<keyword id="KW-0999">Mitochondrion inner membrane</keyword>
<keyword id="KW-0679">Respiratory chain</keyword>
<keyword id="KW-1278">Translocase</keyword>
<keyword id="KW-0812">Transmembrane</keyword>
<keyword id="KW-1133">Transmembrane helix</keyword>
<keyword id="KW-0813">Transport</keyword>
<proteinExistence type="inferred from homology"/>
<protein>
    <recommendedName>
        <fullName>Cytochrome c oxidase subunit 2</fullName>
        <ecNumber>7.1.1.9</ecNumber>
    </recommendedName>
    <alternativeName>
        <fullName>Cytochrome c oxidase polypeptide II</fullName>
    </alternativeName>
</protein>
<geneLocation type="mitochondrion"/>
<sequence>MAHAAQVGLQDATSPIMEELIIFHDHALMIIFLICFLVLYALFLTLTTKLTSTNISDAQEMETVWTILPAIILVLIALPSLRILYMTDEINDPSFTIKSIGHQWYWTYEYTDYGGLIFNSYMLPPLFLEPGDLRLLDVDNRVVLPVEAPVRMMITSQDVLHSWAVPTLGLKTDAIPGRLNQTTFTATRPGLYYGQCSEICGANHSFMPIVLELIPLKIFEMGPVFTL</sequence>
<gene>
    <name type="primary">MT-CO2</name>
    <name type="synonym">COII</name>
    <name type="synonym">COX2</name>
    <name type="synonym">COXII</name>
    <name type="synonym">MTCO2</name>
</gene>
<reference key="1">
    <citation type="journal article" date="1994" name="Proc. Natl. Acad. Sci. U.S.A.">
        <title>Gene trees and hominoid phylogeny.</title>
        <authorList>
            <person name="Ruvolo M."/>
            <person name="Pan D."/>
            <person name="Zehr S."/>
            <person name="Goldberg T."/>
            <person name="Disotell T.R."/>
            <person name="von Dornum M."/>
        </authorList>
    </citation>
    <scope>NUCLEOTIDE SEQUENCE [GENOMIC DNA]</scope>
    <source>
        <strain>Isolate San Diego zoo GGO6</strain>
    </source>
</reference>
<comment type="function">
    <text evidence="2">Component of the cytochrome c oxidase, the last enzyme in the mitochondrial electron transport chain which drives oxidative phosphorylation. The respiratory chain contains 3 multisubunit complexes succinate dehydrogenase (complex II, CII), ubiquinol-cytochrome c oxidoreductase (cytochrome b-c1 complex, complex III, CIII) and cytochrome c oxidase (complex IV, CIV), that cooperate to transfer electrons derived from NADH and succinate to molecular oxygen, creating an electrochemical gradient over the inner membrane that drives transmembrane transport and the ATP synthase. Cytochrome c oxidase is the component of the respiratory chain that catalyzes the reduction of oxygen to water. Electrons originating from reduced cytochrome c in the intermembrane space (IMS) are transferred via the dinuclear copper A center (CU(A)) of subunit 2 and heme A of subunit 1 to the active site in subunit 1, a binuclear center (BNC) formed by heme A3 and copper B (CU(B)). The BNC reduces molecular oxygen to 2 water molecules using 4 electrons from cytochrome c in the IMS and 4 protons from the mitochondrial matrix.</text>
</comment>
<comment type="catalytic activity">
    <reaction evidence="2">
        <text>4 Fe(II)-[cytochrome c] + O2 + 8 H(+)(in) = 4 Fe(III)-[cytochrome c] + 2 H2O + 4 H(+)(out)</text>
        <dbReference type="Rhea" id="RHEA:11436"/>
        <dbReference type="Rhea" id="RHEA-COMP:10350"/>
        <dbReference type="Rhea" id="RHEA-COMP:14399"/>
        <dbReference type="ChEBI" id="CHEBI:15377"/>
        <dbReference type="ChEBI" id="CHEBI:15378"/>
        <dbReference type="ChEBI" id="CHEBI:15379"/>
        <dbReference type="ChEBI" id="CHEBI:29033"/>
        <dbReference type="ChEBI" id="CHEBI:29034"/>
        <dbReference type="EC" id="7.1.1.9"/>
    </reaction>
    <physiologicalReaction direction="left-to-right" evidence="2">
        <dbReference type="Rhea" id="RHEA:11437"/>
    </physiologicalReaction>
</comment>
<comment type="cofactor">
    <cofactor evidence="3">
        <name>Cu cation</name>
        <dbReference type="ChEBI" id="CHEBI:23378"/>
    </cofactor>
    <text evidence="3">Binds a dinuclear copper A center per subunit.</text>
</comment>
<comment type="subunit">
    <text evidence="1 3">Component of the cytochrome c oxidase (complex IV, CIV), a multisubunit enzyme composed of 14 subunits. The complex is composed of a catalytic core of 3 subunits MT-CO1, MT-CO2 and MT-CO3, encoded in the mitochondrial DNA, and 11 supernumerary subunits COX4I, COX5A, COX5B, COX6A, COX6B, COX6C, COX7A, COX7B, COX7C, COX8 and NDUFA4, which are encoded in the nuclear genome. The complex exists as a monomer or a dimer and forms supercomplexes (SCs) in the inner mitochondrial membrane with NADH-ubiquinone oxidoreductase (complex I, CI) and ubiquinol-cytochrome c oxidoreductase (cytochrome b-c1 complex, complex III, CIII), resulting in different assemblies (supercomplex SCI(1)III(2)IV(1) and megacomplex MCI(2)III(2)IV(2)) (By similarity). Found in a complex with TMEM177, COA6, COX18, COX20, SCO1 and SCO2. Interacts with TMEM177 in a COX20-dependent manner. Interacts with COX20. Interacts with COX16 (By similarity).</text>
</comment>
<comment type="subcellular location">
    <subcellularLocation>
        <location evidence="3">Mitochondrion inner membrane</location>
        <topology evidence="3">Multi-pass membrane protein</topology>
    </subcellularLocation>
</comment>
<comment type="similarity">
    <text evidence="4">Belongs to the cytochrome c oxidase subunit 2 family.</text>
</comment>
<name>COX2_GORBE</name>
<feature type="chain" id="PRO_0000183604" description="Cytochrome c oxidase subunit 2">
    <location>
        <begin position="1"/>
        <end position="227"/>
    </location>
</feature>
<feature type="topological domain" description="Mitochondrial intermembrane" evidence="3">
    <location>
        <begin position="1"/>
        <end position="14"/>
    </location>
</feature>
<feature type="transmembrane region" description="Helical; Name=I" evidence="3">
    <location>
        <begin position="15"/>
        <end position="45"/>
    </location>
</feature>
<feature type="topological domain" description="Mitochondrial matrix" evidence="3">
    <location>
        <begin position="46"/>
        <end position="59"/>
    </location>
</feature>
<feature type="transmembrane region" description="Helical; Name=II" evidence="3">
    <location>
        <begin position="60"/>
        <end position="87"/>
    </location>
</feature>
<feature type="topological domain" description="Mitochondrial intermembrane" evidence="3">
    <location>
        <begin position="88"/>
        <end position="227"/>
    </location>
</feature>
<feature type="binding site" evidence="3">
    <location>
        <position position="161"/>
    </location>
    <ligand>
        <name>Cu cation</name>
        <dbReference type="ChEBI" id="CHEBI:23378"/>
        <label>A1</label>
    </ligand>
</feature>
<feature type="binding site" evidence="3">
    <location>
        <position position="196"/>
    </location>
    <ligand>
        <name>Cu cation</name>
        <dbReference type="ChEBI" id="CHEBI:23378"/>
        <label>A1</label>
    </ligand>
</feature>
<feature type="binding site" evidence="3">
    <location>
        <position position="196"/>
    </location>
    <ligand>
        <name>Cu cation</name>
        <dbReference type="ChEBI" id="CHEBI:23378"/>
        <label>A2</label>
    </ligand>
</feature>
<feature type="binding site" evidence="3">
    <location>
        <position position="198"/>
    </location>
    <ligand>
        <name>Cu cation</name>
        <dbReference type="ChEBI" id="CHEBI:23378"/>
        <label>A2</label>
    </ligand>
</feature>
<feature type="binding site" evidence="3">
    <location>
        <position position="198"/>
    </location>
    <ligand>
        <name>Mg(2+)</name>
        <dbReference type="ChEBI" id="CHEBI:18420"/>
        <note>ligand shared with MT-CO1</note>
    </ligand>
</feature>
<feature type="binding site" evidence="3">
    <location>
        <position position="200"/>
    </location>
    <ligand>
        <name>Cu cation</name>
        <dbReference type="ChEBI" id="CHEBI:23378"/>
        <label>A1</label>
    </ligand>
</feature>
<feature type="binding site" evidence="3">
    <location>
        <position position="200"/>
    </location>
    <ligand>
        <name>Cu cation</name>
        <dbReference type="ChEBI" id="CHEBI:23378"/>
        <label>A2</label>
    </ligand>
</feature>
<feature type="binding site" evidence="3">
    <location>
        <position position="204"/>
    </location>
    <ligand>
        <name>Cu cation</name>
        <dbReference type="ChEBI" id="CHEBI:23378"/>
        <label>A2</label>
    </ligand>
</feature>
<feature type="binding site" evidence="3">
    <location>
        <position position="207"/>
    </location>
    <ligand>
        <name>Cu cation</name>
        <dbReference type="ChEBI" id="CHEBI:23378"/>
        <label>A1</label>
    </ligand>
</feature>
<dbReference type="EC" id="7.1.1.9"/>
<dbReference type="EMBL" id="U12701">
    <property type="protein sequence ID" value="AAA61410.1"/>
    <property type="molecule type" value="Genomic_DNA"/>
</dbReference>
<dbReference type="SMR" id="Q37472"/>
<dbReference type="GO" id="GO:0005743">
    <property type="term" value="C:mitochondrial inner membrane"/>
    <property type="evidence" value="ECO:0007669"/>
    <property type="project" value="UniProtKB-SubCell"/>
</dbReference>
<dbReference type="GO" id="GO:0045277">
    <property type="term" value="C:respiratory chain complex IV"/>
    <property type="evidence" value="ECO:0000250"/>
    <property type="project" value="UniProtKB"/>
</dbReference>
<dbReference type="GO" id="GO:0005507">
    <property type="term" value="F:copper ion binding"/>
    <property type="evidence" value="ECO:0007669"/>
    <property type="project" value="InterPro"/>
</dbReference>
<dbReference type="GO" id="GO:0004129">
    <property type="term" value="F:cytochrome-c oxidase activity"/>
    <property type="evidence" value="ECO:0007669"/>
    <property type="project" value="UniProtKB-EC"/>
</dbReference>
<dbReference type="GO" id="GO:0042773">
    <property type="term" value="P:ATP synthesis coupled electron transport"/>
    <property type="evidence" value="ECO:0007669"/>
    <property type="project" value="TreeGrafter"/>
</dbReference>
<dbReference type="CDD" id="cd13912">
    <property type="entry name" value="CcO_II_C"/>
    <property type="match status" value="1"/>
</dbReference>
<dbReference type="FunFam" id="1.10.287.90:FF:000001">
    <property type="entry name" value="Cytochrome c oxidase subunit 2"/>
    <property type="match status" value="1"/>
</dbReference>
<dbReference type="FunFam" id="2.60.40.420:FF:000001">
    <property type="entry name" value="Cytochrome c oxidase subunit 2"/>
    <property type="match status" value="1"/>
</dbReference>
<dbReference type="Gene3D" id="1.10.287.90">
    <property type="match status" value="1"/>
</dbReference>
<dbReference type="Gene3D" id="2.60.40.420">
    <property type="entry name" value="Cupredoxins - blue copper proteins"/>
    <property type="match status" value="1"/>
</dbReference>
<dbReference type="InterPro" id="IPR045187">
    <property type="entry name" value="CcO_II"/>
</dbReference>
<dbReference type="InterPro" id="IPR002429">
    <property type="entry name" value="CcO_II-like_C"/>
</dbReference>
<dbReference type="InterPro" id="IPR034210">
    <property type="entry name" value="CcO_II_C"/>
</dbReference>
<dbReference type="InterPro" id="IPR001505">
    <property type="entry name" value="Copper_CuA"/>
</dbReference>
<dbReference type="InterPro" id="IPR008972">
    <property type="entry name" value="Cupredoxin"/>
</dbReference>
<dbReference type="InterPro" id="IPR014222">
    <property type="entry name" value="Cyt_c_oxidase_su2"/>
</dbReference>
<dbReference type="InterPro" id="IPR011759">
    <property type="entry name" value="Cyt_c_oxidase_su2_TM_dom"/>
</dbReference>
<dbReference type="InterPro" id="IPR036257">
    <property type="entry name" value="Cyt_c_oxidase_su2_TM_sf"/>
</dbReference>
<dbReference type="NCBIfam" id="TIGR02866">
    <property type="entry name" value="CoxB"/>
    <property type="match status" value="1"/>
</dbReference>
<dbReference type="PANTHER" id="PTHR22888:SF9">
    <property type="entry name" value="CYTOCHROME C OXIDASE SUBUNIT 2"/>
    <property type="match status" value="1"/>
</dbReference>
<dbReference type="PANTHER" id="PTHR22888">
    <property type="entry name" value="CYTOCHROME C OXIDASE, SUBUNIT II"/>
    <property type="match status" value="1"/>
</dbReference>
<dbReference type="Pfam" id="PF00116">
    <property type="entry name" value="COX2"/>
    <property type="match status" value="1"/>
</dbReference>
<dbReference type="Pfam" id="PF02790">
    <property type="entry name" value="COX2_TM"/>
    <property type="match status" value="1"/>
</dbReference>
<dbReference type="PRINTS" id="PR01166">
    <property type="entry name" value="CYCOXIDASEII"/>
</dbReference>
<dbReference type="SUPFAM" id="SSF49503">
    <property type="entry name" value="Cupredoxins"/>
    <property type="match status" value="1"/>
</dbReference>
<dbReference type="SUPFAM" id="SSF81464">
    <property type="entry name" value="Cytochrome c oxidase subunit II-like, transmembrane region"/>
    <property type="match status" value="1"/>
</dbReference>
<dbReference type="PROSITE" id="PS00078">
    <property type="entry name" value="COX2"/>
    <property type="match status" value="1"/>
</dbReference>
<dbReference type="PROSITE" id="PS50857">
    <property type="entry name" value="COX2_CUA"/>
    <property type="match status" value="1"/>
</dbReference>
<dbReference type="PROSITE" id="PS50999">
    <property type="entry name" value="COX2_TM"/>
    <property type="match status" value="1"/>
</dbReference>
<evidence type="ECO:0000250" key="1">
    <source>
        <dbReference type="UniProtKB" id="P00403"/>
    </source>
</evidence>
<evidence type="ECO:0000250" key="2">
    <source>
        <dbReference type="UniProtKB" id="P00410"/>
    </source>
</evidence>
<evidence type="ECO:0000250" key="3">
    <source>
        <dbReference type="UniProtKB" id="P68530"/>
    </source>
</evidence>
<evidence type="ECO:0000305" key="4"/>
<organism>
    <name type="scientific">Gorilla gorilla beringei</name>
    <name type="common">Mountain gorilla</name>
    <name type="synonym">Highland gorilla</name>
    <dbReference type="NCBI Taxonomy" id="499232"/>
    <lineage>
        <taxon>Eukaryota</taxon>
        <taxon>Metazoa</taxon>
        <taxon>Chordata</taxon>
        <taxon>Craniata</taxon>
        <taxon>Vertebrata</taxon>
        <taxon>Euteleostomi</taxon>
        <taxon>Mammalia</taxon>
        <taxon>Eutheria</taxon>
        <taxon>Euarchontoglires</taxon>
        <taxon>Primates</taxon>
        <taxon>Haplorrhini</taxon>
        <taxon>Catarrhini</taxon>
        <taxon>Hominidae</taxon>
        <taxon>Gorilla</taxon>
    </lineage>
</organism>
<accession>Q37472</accession>